<protein>
    <recommendedName>
        <fullName evidence="10">LysM domain-containing GPI-anchored protein LYP4</fullName>
    </recommendedName>
    <alternativeName>
        <fullName evidence="9">LysM domain-containing protein 4</fullName>
        <shortName evidence="9">Os-LYP4</shortName>
    </alternativeName>
</protein>
<comment type="function">
    <text evidence="5 6">Functions in innate immunity. Functions as a pattern recognition receptor (PRR), sensing bacterial peptidoglycan (PGN) and fungal chitin at the cell surface. Involved in resistance against the bacterial pathogen Xanthomonas oryzae pv. oryzae (Xoo) and the fungal pathogen Magnaporthe oryzae. Binds PGN and fungal chitin in vitro (PubMed:22872757). Involved in microbe-associated molecular patterns (MAMPs) perception and participates in the activation of defense genes against the bacterial pathogen Xanthomonas oryzae pv. oryzicola (Xoc) or the fungal pathogen Magnaporthe oryzae (PubMed:23299421).</text>
</comment>
<comment type="subunit">
    <text evidence="6 7 8">Interacts with LYP6 (PubMed:23299421). Interacts with CEBIP (PubMed:23299421, PubMed:24964058). Interacts with CERK1 (PubMed:24964058, PubMed:25335639).</text>
</comment>
<comment type="subcellular location">
    <subcellularLocation>
        <location evidence="5 8">Cell membrane</location>
        <topology evidence="2">Lipid-anchor</topology>
        <topology evidence="2">GPI-anchor</topology>
    </subcellularLocation>
</comment>
<comment type="tissue specificity">
    <text evidence="5">Expressed in roots and leaves.</text>
</comment>
<comment type="induction">
    <text evidence="5">Induced by infection with the bacterial pathogen Xanthomonas oryzae pv. oryzae.</text>
</comment>
<comment type="miscellaneous">
    <text evidence="5">Plants silencing LYP4 exhibit significant compromised defense responses and enhanced susceptibility toward the bacterial pathogen Xanthomonas oryzae and the fungal pathogen Magnaporthe oryzae.</text>
</comment>
<sequence>MPPPLLLLLLLAAAAAAVAPARSKSTLESCSSSTACPALLSYTLYADLKLAELAALFSADPLAILAANSIDFAVPDPADRILPAGLPLRVPVPCACSDGIRRVTTVRYVARPGDTLASVASSVYGGLTTPDWISDSNGILGAKPDAAVDAGTTLFVPLHCACFGGVDNGLPAVYLTYVAGKGDTVAAVAQRYRTTATDLMSVNDMATPELAAGDIIVVPLPACTSSFPAFTADYGLAVANGTYAVTANRCVQCSCGPGNLDLFCVPAPLADSTCSSMQCANSSMMLGNFTLLMTSSGCSVTSCSYGGFVNGTILTTLTTALKPQCPGPHQYPPLIPPPTSSFFETYLGPSPTPMASEGGVMAGMAPTSTPAASSGPPPAGRHVVGDVLGAFALCLVGNLLW</sequence>
<keyword id="KW-1003">Cell membrane</keyword>
<keyword id="KW-1015">Disulfide bond</keyword>
<keyword id="KW-0325">Glycoprotein</keyword>
<keyword id="KW-0336">GPI-anchor</keyword>
<keyword id="KW-0391">Immunity</keyword>
<keyword id="KW-0399">Innate immunity</keyword>
<keyword id="KW-0449">Lipoprotein</keyword>
<keyword id="KW-0472">Membrane</keyword>
<keyword id="KW-0611">Plant defense</keyword>
<keyword id="KW-0675">Receptor</keyword>
<keyword id="KW-1185">Reference proteome</keyword>
<keyword id="KW-0677">Repeat</keyword>
<keyword id="KW-0732">Signal</keyword>
<organism>
    <name type="scientific">Oryza sativa subsp. japonica</name>
    <name type="common">Rice</name>
    <dbReference type="NCBI Taxonomy" id="39947"/>
    <lineage>
        <taxon>Eukaryota</taxon>
        <taxon>Viridiplantae</taxon>
        <taxon>Streptophyta</taxon>
        <taxon>Embryophyta</taxon>
        <taxon>Tracheophyta</taxon>
        <taxon>Spermatophyta</taxon>
        <taxon>Magnoliopsida</taxon>
        <taxon>Liliopsida</taxon>
        <taxon>Poales</taxon>
        <taxon>Poaceae</taxon>
        <taxon>BOP clade</taxon>
        <taxon>Oryzoideae</taxon>
        <taxon>Oryzeae</taxon>
        <taxon>Oryzinae</taxon>
        <taxon>Oryza</taxon>
        <taxon>Oryza sativa</taxon>
    </lineage>
</organism>
<feature type="signal peptide" evidence="2">
    <location>
        <begin position="1"/>
        <end position="23"/>
    </location>
</feature>
<feature type="chain" id="PRO_5010141336" description="LysM domain-containing GPI-anchored protein LYP4" evidence="2">
    <location>
        <begin position="24"/>
        <end position="373"/>
    </location>
</feature>
<feature type="propeptide" id="PRO_0000440896" description="Removed in mature form" evidence="2">
    <location>
        <begin position="374"/>
        <end position="401"/>
    </location>
</feature>
<feature type="domain" description="LysM 1" evidence="4">
    <location>
        <begin position="106"/>
        <end position="156"/>
    </location>
</feature>
<feature type="domain" description="LysM 2" evidence="4">
    <location>
        <begin position="175"/>
        <end position="218"/>
    </location>
</feature>
<feature type="lipid moiety-binding region" description="GPI-anchor amidated serine" evidence="2">
    <location>
        <position position="373"/>
    </location>
</feature>
<feature type="glycosylation site" description="N-linked (GlcNAc...) asparagine" evidence="3">
    <location>
        <position position="240"/>
    </location>
</feature>
<feature type="glycosylation site" description="N-linked (GlcNAc...) asparagine" evidence="3">
    <location>
        <position position="281"/>
    </location>
</feature>
<feature type="glycosylation site" description="N-linked (GlcNAc...) asparagine" evidence="3">
    <location>
        <position position="288"/>
    </location>
</feature>
<feature type="glycosylation site" description="N-linked (GlcNAc...) asparagine" evidence="3">
    <location>
        <position position="310"/>
    </location>
</feature>
<feature type="disulfide bond" evidence="1">
    <location>
        <begin position="30"/>
        <end position="96"/>
    </location>
</feature>
<feature type="disulfide bond" evidence="1">
    <location>
        <begin position="36"/>
        <end position="162"/>
    </location>
</feature>
<feature type="disulfide bond" evidence="1">
    <location>
        <begin position="94"/>
        <end position="160"/>
    </location>
</feature>
<feature type="disulfide bond" evidence="1">
    <location>
        <begin position="96"/>
        <end position="162"/>
    </location>
</feature>
<feature type="disulfide bond" evidence="1">
    <location>
        <begin position="223"/>
        <end position="255"/>
    </location>
</feature>
<feature type="disulfide bond" evidence="1">
    <location>
        <begin position="250"/>
        <end position="279"/>
    </location>
</feature>
<dbReference type="EMBL" id="AP005393">
    <property type="protein sequence ID" value="BAD38015.1"/>
    <property type="molecule type" value="Genomic_DNA"/>
</dbReference>
<dbReference type="EMBL" id="AP005559">
    <property type="protein sequence ID" value="BAD38221.1"/>
    <property type="molecule type" value="Genomic_DNA"/>
</dbReference>
<dbReference type="EMBL" id="AP008215">
    <property type="protein sequence ID" value="BAF25249.1"/>
    <property type="molecule type" value="Genomic_DNA"/>
</dbReference>
<dbReference type="EMBL" id="AP014965">
    <property type="protein sequence ID" value="BAT08391.1"/>
    <property type="molecule type" value="Genomic_DNA"/>
</dbReference>
<dbReference type="EMBL" id="CM000146">
    <property type="protein sequence ID" value="EEE69832.1"/>
    <property type="molecule type" value="Genomic_DNA"/>
</dbReference>
<dbReference type="EMBL" id="AK059479">
    <property type="protein sequence ID" value="BAG87005.1"/>
    <property type="molecule type" value="mRNA"/>
</dbReference>
<dbReference type="EMBL" id="AK106042">
    <property type="protein sequence ID" value="BAG97526.1"/>
    <property type="molecule type" value="mRNA"/>
</dbReference>
<dbReference type="RefSeq" id="XP_015610852.1">
    <property type="nucleotide sequence ID" value="XM_015755366.1"/>
</dbReference>
<dbReference type="SMR" id="Q67UE8"/>
<dbReference type="STRING" id="39947.Q67UE8"/>
<dbReference type="GlyCosmos" id="Q67UE8">
    <property type="glycosylation" value="4 sites, No reported glycans"/>
</dbReference>
<dbReference type="PaxDb" id="39947-Q67UE8"/>
<dbReference type="EnsemblPlants" id="Os09t0452200-01">
    <property type="protein sequence ID" value="Os09t0452200-01"/>
    <property type="gene ID" value="Os09g0452200"/>
</dbReference>
<dbReference type="EnsemblPlants" id="Os09t0452200-02">
    <property type="protein sequence ID" value="Os09t0452200-02"/>
    <property type="gene ID" value="Os09g0452200"/>
</dbReference>
<dbReference type="Gramene" id="Os09t0452200-01">
    <property type="protein sequence ID" value="Os09t0452200-01"/>
    <property type="gene ID" value="Os09g0452200"/>
</dbReference>
<dbReference type="Gramene" id="Os09t0452200-02">
    <property type="protein sequence ID" value="Os09t0452200-02"/>
    <property type="gene ID" value="Os09g0452200"/>
</dbReference>
<dbReference type="KEGG" id="dosa:Os09g0452200"/>
<dbReference type="eggNOG" id="ENOG502QWAT">
    <property type="taxonomic scope" value="Eukaryota"/>
</dbReference>
<dbReference type="HOGENOM" id="CLU_047073_3_0_1"/>
<dbReference type="InParanoid" id="Q67UE8"/>
<dbReference type="OMA" id="VNDMANA"/>
<dbReference type="OrthoDB" id="2107166at2759"/>
<dbReference type="PlantReactome" id="R-OSA-9611432">
    <property type="pathway name" value="Recognition of fungal and bacterial pathogens and immunity response"/>
</dbReference>
<dbReference type="Proteomes" id="UP000000763">
    <property type="component" value="Chromosome 9"/>
</dbReference>
<dbReference type="Proteomes" id="UP000007752">
    <property type="component" value="Chromosome 9"/>
</dbReference>
<dbReference type="Proteomes" id="UP000059680">
    <property type="component" value="Chromosome 9"/>
</dbReference>
<dbReference type="GO" id="GO:0005886">
    <property type="term" value="C:plasma membrane"/>
    <property type="evidence" value="ECO:0007669"/>
    <property type="project" value="UniProtKB-SubCell"/>
</dbReference>
<dbReference type="GO" id="GO:0098552">
    <property type="term" value="C:side of membrane"/>
    <property type="evidence" value="ECO:0007669"/>
    <property type="project" value="UniProtKB-KW"/>
</dbReference>
<dbReference type="GO" id="GO:0045087">
    <property type="term" value="P:innate immune response"/>
    <property type="evidence" value="ECO:0007669"/>
    <property type="project" value="UniProtKB-KW"/>
</dbReference>
<dbReference type="CDD" id="cd00118">
    <property type="entry name" value="LysM"/>
    <property type="match status" value="1"/>
</dbReference>
<dbReference type="Gene3D" id="3.10.350.10">
    <property type="entry name" value="LysM domain"/>
    <property type="match status" value="1"/>
</dbReference>
<dbReference type="InterPro" id="IPR018392">
    <property type="entry name" value="LysM_dom"/>
</dbReference>
<dbReference type="InterPro" id="IPR036779">
    <property type="entry name" value="LysM_dom_sf"/>
</dbReference>
<dbReference type="PANTHER" id="PTHR33734">
    <property type="entry name" value="LYSM DOMAIN-CONTAINING GPI-ANCHORED PROTEIN 2"/>
    <property type="match status" value="1"/>
</dbReference>
<dbReference type="PANTHER" id="PTHR33734:SF29">
    <property type="entry name" value="LYSM DOMAIN-CONTAINING GPI-ANCHORED PROTEIN LYP4"/>
    <property type="match status" value="1"/>
</dbReference>
<dbReference type="Pfam" id="PF01476">
    <property type="entry name" value="LysM"/>
    <property type="match status" value="2"/>
</dbReference>
<dbReference type="SMART" id="SM00257">
    <property type="entry name" value="LysM"/>
    <property type="match status" value="2"/>
</dbReference>
<dbReference type="SUPFAM" id="SSF54106">
    <property type="entry name" value="LysM domain"/>
    <property type="match status" value="1"/>
</dbReference>
<dbReference type="PROSITE" id="PS51782">
    <property type="entry name" value="LYSM"/>
    <property type="match status" value="2"/>
</dbReference>
<evidence type="ECO:0000250" key="1">
    <source>
        <dbReference type="UniProtKB" id="Q8H8C7"/>
    </source>
</evidence>
<evidence type="ECO:0000255" key="2"/>
<evidence type="ECO:0000255" key="3">
    <source>
        <dbReference type="PROSITE-ProRule" id="PRU00498"/>
    </source>
</evidence>
<evidence type="ECO:0000255" key="4">
    <source>
        <dbReference type="PROSITE-ProRule" id="PRU01118"/>
    </source>
</evidence>
<evidence type="ECO:0000269" key="5">
    <source>
    </source>
</evidence>
<evidence type="ECO:0000269" key="6">
    <source>
    </source>
</evidence>
<evidence type="ECO:0000269" key="7">
    <source>
    </source>
</evidence>
<evidence type="ECO:0000269" key="8">
    <source>
    </source>
</evidence>
<evidence type="ECO:0000303" key="9">
    <source>
    </source>
</evidence>
<evidence type="ECO:0000305" key="10"/>
<evidence type="ECO:0000312" key="11">
    <source>
        <dbReference type="EMBL" id="BAD38015.1"/>
    </source>
</evidence>
<evidence type="ECO:0000312" key="12">
    <source>
        <dbReference type="EMBL" id="BAD38221.1"/>
    </source>
</evidence>
<evidence type="ECO:0000312" key="13">
    <source>
        <dbReference type="EMBL" id="BAF25249.1"/>
    </source>
</evidence>
<evidence type="ECO:0000312" key="14">
    <source>
        <dbReference type="EMBL" id="EEE69832.1"/>
    </source>
</evidence>
<accession>Q67UE8</accession>
<reference key="1">
    <citation type="journal article" date="2005" name="Nature">
        <title>The map-based sequence of the rice genome.</title>
        <authorList>
            <consortium name="International rice genome sequencing project (IRGSP)"/>
        </authorList>
    </citation>
    <scope>NUCLEOTIDE SEQUENCE [LARGE SCALE GENOMIC DNA]</scope>
    <source>
        <strain>cv. Nipponbare</strain>
    </source>
</reference>
<reference key="2">
    <citation type="journal article" date="2008" name="Nucleic Acids Res.">
        <title>The rice annotation project database (RAP-DB): 2008 update.</title>
        <authorList>
            <consortium name="The rice annotation project (RAP)"/>
        </authorList>
    </citation>
    <scope>GENOME REANNOTATION</scope>
    <source>
        <strain>cv. Nipponbare</strain>
    </source>
</reference>
<reference key="3">
    <citation type="journal article" date="2013" name="Rice">
        <title>Improvement of the Oryza sativa Nipponbare reference genome using next generation sequence and optical map data.</title>
        <authorList>
            <person name="Kawahara Y."/>
            <person name="de la Bastide M."/>
            <person name="Hamilton J.P."/>
            <person name="Kanamori H."/>
            <person name="McCombie W.R."/>
            <person name="Ouyang S."/>
            <person name="Schwartz D.C."/>
            <person name="Tanaka T."/>
            <person name="Wu J."/>
            <person name="Zhou S."/>
            <person name="Childs K.L."/>
            <person name="Davidson R.M."/>
            <person name="Lin H."/>
            <person name="Quesada-Ocampo L."/>
            <person name="Vaillancourt B."/>
            <person name="Sakai H."/>
            <person name="Lee S.S."/>
            <person name="Kim J."/>
            <person name="Numa H."/>
            <person name="Itoh T."/>
            <person name="Buell C.R."/>
            <person name="Matsumoto T."/>
        </authorList>
    </citation>
    <scope>GENOME REANNOTATION</scope>
    <source>
        <strain>cv. Nipponbare</strain>
    </source>
</reference>
<reference key="4">
    <citation type="journal article" date="2005" name="PLoS Biol.">
        <title>The genomes of Oryza sativa: a history of duplications.</title>
        <authorList>
            <person name="Yu J."/>
            <person name="Wang J."/>
            <person name="Lin W."/>
            <person name="Li S."/>
            <person name="Li H."/>
            <person name="Zhou J."/>
            <person name="Ni P."/>
            <person name="Dong W."/>
            <person name="Hu S."/>
            <person name="Zeng C."/>
            <person name="Zhang J."/>
            <person name="Zhang Y."/>
            <person name="Li R."/>
            <person name="Xu Z."/>
            <person name="Li S."/>
            <person name="Li X."/>
            <person name="Zheng H."/>
            <person name="Cong L."/>
            <person name="Lin L."/>
            <person name="Yin J."/>
            <person name="Geng J."/>
            <person name="Li G."/>
            <person name="Shi J."/>
            <person name="Liu J."/>
            <person name="Lv H."/>
            <person name="Li J."/>
            <person name="Wang J."/>
            <person name="Deng Y."/>
            <person name="Ran L."/>
            <person name="Shi X."/>
            <person name="Wang X."/>
            <person name="Wu Q."/>
            <person name="Li C."/>
            <person name="Ren X."/>
            <person name="Wang J."/>
            <person name="Wang X."/>
            <person name="Li D."/>
            <person name="Liu D."/>
            <person name="Zhang X."/>
            <person name="Ji Z."/>
            <person name="Zhao W."/>
            <person name="Sun Y."/>
            <person name="Zhang Z."/>
            <person name="Bao J."/>
            <person name="Han Y."/>
            <person name="Dong L."/>
            <person name="Ji J."/>
            <person name="Chen P."/>
            <person name="Wu S."/>
            <person name="Liu J."/>
            <person name="Xiao Y."/>
            <person name="Bu D."/>
            <person name="Tan J."/>
            <person name="Yang L."/>
            <person name="Ye C."/>
            <person name="Zhang J."/>
            <person name="Xu J."/>
            <person name="Zhou Y."/>
            <person name="Yu Y."/>
            <person name="Zhang B."/>
            <person name="Zhuang S."/>
            <person name="Wei H."/>
            <person name="Liu B."/>
            <person name="Lei M."/>
            <person name="Yu H."/>
            <person name="Li Y."/>
            <person name="Xu H."/>
            <person name="Wei S."/>
            <person name="He X."/>
            <person name="Fang L."/>
            <person name="Zhang Z."/>
            <person name="Zhang Y."/>
            <person name="Huang X."/>
            <person name="Su Z."/>
            <person name="Tong W."/>
            <person name="Li J."/>
            <person name="Tong Z."/>
            <person name="Li S."/>
            <person name="Ye J."/>
            <person name="Wang L."/>
            <person name="Fang L."/>
            <person name="Lei T."/>
            <person name="Chen C.-S."/>
            <person name="Chen H.-C."/>
            <person name="Xu Z."/>
            <person name="Li H."/>
            <person name="Huang H."/>
            <person name="Zhang F."/>
            <person name="Xu H."/>
            <person name="Li N."/>
            <person name="Zhao C."/>
            <person name="Li S."/>
            <person name="Dong L."/>
            <person name="Huang Y."/>
            <person name="Li L."/>
            <person name="Xi Y."/>
            <person name="Qi Q."/>
            <person name="Li W."/>
            <person name="Zhang B."/>
            <person name="Hu W."/>
            <person name="Zhang Y."/>
            <person name="Tian X."/>
            <person name="Jiao Y."/>
            <person name="Liang X."/>
            <person name="Jin J."/>
            <person name="Gao L."/>
            <person name="Zheng W."/>
            <person name="Hao B."/>
            <person name="Liu S.-M."/>
            <person name="Wang W."/>
            <person name="Yuan L."/>
            <person name="Cao M."/>
            <person name="McDermott J."/>
            <person name="Samudrala R."/>
            <person name="Wang J."/>
            <person name="Wong G.K.-S."/>
            <person name="Yang H."/>
        </authorList>
    </citation>
    <scope>NUCLEOTIDE SEQUENCE [LARGE SCALE GENOMIC DNA]</scope>
    <source>
        <strain>cv. Nipponbare</strain>
    </source>
</reference>
<reference key="5">
    <citation type="journal article" date="2003" name="Science">
        <title>Collection, mapping, and annotation of over 28,000 cDNA clones from japonica rice.</title>
        <authorList>
            <consortium name="The rice full-length cDNA consortium"/>
        </authorList>
    </citation>
    <scope>NUCLEOTIDE SEQUENCE [LARGE SCALE MRNA]</scope>
    <source>
        <strain>cv. Nipponbare</strain>
    </source>
</reference>
<reference key="6">
    <citation type="journal article" date="2012" name="Plant Cell">
        <title>Lysin motif-containing proteins LYP4 and LYP6 play dual roles in peptidoglycan and chitin perception in rice innate immunity.</title>
        <authorList>
            <person name="Liu B."/>
            <person name="Li J.F."/>
            <person name="Ao Y."/>
            <person name="Qu J."/>
            <person name="Li Z."/>
            <person name="Su J."/>
            <person name="Zhang Y."/>
            <person name="Liu J."/>
            <person name="Feng D."/>
            <person name="Qi K."/>
            <person name="He Y."/>
            <person name="Wang J."/>
            <person name="Wang H.B."/>
        </authorList>
    </citation>
    <scope>FUNCTION</scope>
    <scope>SUBCELLULAR LOCATION</scope>
    <scope>TISSUE SPECIFICITY</scope>
    <scope>INDUCTION</scope>
</reference>
<reference key="7">
    <citation type="journal article" date="2013" name="Plant Signal. Behav.">
        <title>OsLYP4 and OsLYP6 play critical roles in rice defense signal transduction.</title>
        <authorList>
            <person name="Liu B."/>
            <person name="Li J.F."/>
            <person name="Ao Y."/>
            <person name="Li Z."/>
            <person name="Liu J."/>
            <person name="Feng D."/>
            <person name="Qi K."/>
            <person name="He Y."/>
            <person name="Zeng L."/>
            <person name="Wang J."/>
            <person name="Wang H.B."/>
        </authorList>
    </citation>
    <scope>FUNCTION</scope>
    <scope>INTERACTION WITH LYP6 AND CEBIP</scope>
</reference>
<reference key="8">
    <citation type="journal article" date="2014" name="Mol. Plant Microbe Interact.">
        <title>Targeted gene disruption of OsCERK1 reveals its indispensable role in chitin perception and involvement in the peptidoglycan response and immunity in rice.</title>
        <authorList>
            <person name="Kouzai Y."/>
            <person name="Mochizuki S."/>
            <person name="Nakajima K."/>
            <person name="Desaki Y."/>
            <person name="Hayafune M."/>
            <person name="Miyazaki H."/>
            <person name="Yokotani N."/>
            <person name="Ozawa K."/>
            <person name="Minami E."/>
            <person name="Kaku H."/>
            <person name="Shibuya N."/>
            <person name="Nishizawa Y."/>
        </authorList>
    </citation>
    <scope>INTERACTION WITH CERK1 AND CEBIP</scope>
</reference>
<reference key="9">
    <citation type="journal article" date="2014" name="Plant J.">
        <title>OsCERK1 and OsRLCK176 play important roles in peptidoglycan and chitin signaling in rice innate immunity.</title>
        <authorList>
            <person name="Ao Y."/>
            <person name="Li Z."/>
            <person name="Feng D."/>
            <person name="Xiong F."/>
            <person name="Liu J."/>
            <person name="Li J.F."/>
            <person name="Wang M."/>
            <person name="Wang J."/>
            <person name="Liu B."/>
            <person name="Wang H.B."/>
        </authorList>
    </citation>
    <scope>INTERACTION WITH CERK1</scope>
    <scope>SUBCELLULAR LOCATION</scope>
</reference>
<gene>
    <name evidence="9" type="primary">LYP4</name>
    <name evidence="13" type="ordered locus">Os09g0452200</name>
    <name evidence="10" type="ordered locus">LOC_Os09g27890</name>
    <name evidence="12" type="ORF">OJ1163_C07.33</name>
    <name evidence="14" type="ORF">OsJ_29593</name>
    <name evidence="11" type="ORF">P0488D02.10</name>
</gene>
<proteinExistence type="evidence at protein level"/>
<name>LYP4_ORYSJ</name>